<comment type="function">
    <text evidence="1">Involved in the biosynthesis of isoprenoids. Catalyzes the 1,3-allylic rearrangement of the homoallylic substrate isopentenyl (IPP) to its allylic isomer, dimethylallyl diphosphate (DMAPP).</text>
</comment>
<comment type="catalytic activity">
    <reaction evidence="1">
        <text>isopentenyl diphosphate = dimethylallyl diphosphate</text>
        <dbReference type="Rhea" id="RHEA:23284"/>
        <dbReference type="ChEBI" id="CHEBI:57623"/>
        <dbReference type="ChEBI" id="CHEBI:128769"/>
        <dbReference type="EC" id="5.3.3.2"/>
    </reaction>
</comment>
<comment type="cofactor">
    <cofactor evidence="1">
        <name>FMN</name>
        <dbReference type="ChEBI" id="CHEBI:58210"/>
    </cofactor>
</comment>
<comment type="cofactor">
    <cofactor evidence="1">
        <name>NADPH</name>
        <dbReference type="ChEBI" id="CHEBI:57783"/>
    </cofactor>
</comment>
<comment type="cofactor">
    <cofactor evidence="1">
        <name>Mg(2+)</name>
        <dbReference type="ChEBI" id="CHEBI:18420"/>
    </cofactor>
</comment>
<comment type="subunit">
    <text evidence="1">Homooctamer. Dimer of tetramers.</text>
</comment>
<comment type="subcellular location">
    <subcellularLocation>
        <location evidence="1">Cytoplasm</location>
    </subcellularLocation>
</comment>
<comment type="similarity">
    <text evidence="1">Belongs to the IPP isomerase type 2 family.</text>
</comment>
<gene>
    <name evidence="1" type="primary">fni</name>
    <name type="ordered locus">Mbar_A1419</name>
</gene>
<reference key="1">
    <citation type="journal article" date="2006" name="J. Bacteriol.">
        <title>The Methanosarcina barkeri genome: comparative analysis with Methanosarcina acetivorans and Methanosarcina mazei reveals extensive rearrangement within methanosarcinal genomes.</title>
        <authorList>
            <person name="Maeder D.L."/>
            <person name="Anderson I."/>
            <person name="Brettin T.S."/>
            <person name="Bruce D.C."/>
            <person name="Gilna P."/>
            <person name="Han C.S."/>
            <person name="Lapidus A."/>
            <person name="Metcalf W.W."/>
            <person name="Saunders E."/>
            <person name="Tapia R."/>
            <person name="Sowers K.R."/>
        </authorList>
    </citation>
    <scope>NUCLEOTIDE SEQUENCE [LARGE SCALE GENOMIC DNA]</scope>
    <source>
        <strain>Fusaro / DSM 804</strain>
    </source>
</reference>
<protein>
    <recommendedName>
        <fullName evidence="1">Isopentenyl-diphosphate delta-isomerase</fullName>
        <shortName evidence="1">IPP isomerase</shortName>
        <ecNumber evidence="1">5.3.3.2</ecNumber>
    </recommendedName>
    <alternativeName>
        <fullName evidence="1">Isopentenyl diphosphate:dimethylallyl diphosphate isomerase</fullName>
    </alternativeName>
    <alternativeName>
        <fullName evidence="1">Isopentenyl pyrophosphate isomerase</fullName>
    </alternativeName>
    <alternativeName>
        <fullName evidence="1">Type 2 isopentenyl diphosphate isomerase</fullName>
        <shortName evidence="1">IDI-2</shortName>
    </alternativeName>
</protein>
<evidence type="ECO:0000255" key="1">
    <source>
        <dbReference type="HAMAP-Rule" id="MF_00354"/>
    </source>
</evidence>
<name>IDI2_METBF</name>
<dbReference type="EC" id="5.3.3.2" evidence="1"/>
<dbReference type="EMBL" id="CP000099">
    <property type="protein sequence ID" value="AAZ70378.1"/>
    <property type="molecule type" value="Genomic_DNA"/>
</dbReference>
<dbReference type="SMR" id="Q46CL4"/>
<dbReference type="STRING" id="269797.Mbar_A1419"/>
<dbReference type="PaxDb" id="269797-Mbar_A1419"/>
<dbReference type="KEGG" id="mba:Mbar_A1419"/>
<dbReference type="eggNOG" id="arCOG00613">
    <property type="taxonomic scope" value="Archaea"/>
</dbReference>
<dbReference type="HOGENOM" id="CLU_065515_1_0_2"/>
<dbReference type="OrthoDB" id="371955at2157"/>
<dbReference type="GO" id="GO:0005737">
    <property type="term" value="C:cytoplasm"/>
    <property type="evidence" value="ECO:0007669"/>
    <property type="project" value="UniProtKB-SubCell"/>
</dbReference>
<dbReference type="GO" id="GO:0010181">
    <property type="term" value="F:FMN binding"/>
    <property type="evidence" value="ECO:0007669"/>
    <property type="project" value="UniProtKB-UniRule"/>
</dbReference>
<dbReference type="GO" id="GO:0004452">
    <property type="term" value="F:isopentenyl-diphosphate delta-isomerase activity"/>
    <property type="evidence" value="ECO:0007669"/>
    <property type="project" value="UniProtKB-UniRule"/>
</dbReference>
<dbReference type="GO" id="GO:0000287">
    <property type="term" value="F:magnesium ion binding"/>
    <property type="evidence" value="ECO:0007669"/>
    <property type="project" value="UniProtKB-UniRule"/>
</dbReference>
<dbReference type="GO" id="GO:0070402">
    <property type="term" value="F:NADPH binding"/>
    <property type="evidence" value="ECO:0007669"/>
    <property type="project" value="UniProtKB-UniRule"/>
</dbReference>
<dbReference type="GO" id="GO:0016491">
    <property type="term" value="F:oxidoreductase activity"/>
    <property type="evidence" value="ECO:0007669"/>
    <property type="project" value="InterPro"/>
</dbReference>
<dbReference type="GO" id="GO:0008299">
    <property type="term" value="P:isoprenoid biosynthetic process"/>
    <property type="evidence" value="ECO:0007669"/>
    <property type="project" value="UniProtKB-UniRule"/>
</dbReference>
<dbReference type="CDD" id="cd02811">
    <property type="entry name" value="IDI-2_FMN"/>
    <property type="match status" value="1"/>
</dbReference>
<dbReference type="Gene3D" id="3.20.20.70">
    <property type="entry name" value="Aldolase class I"/>
    <property type="match status" value="1"/>
</dbReference>
<dbReference type="HAMAP" id="MF_00354">
    <property type="entry name" value="Idi_2"/>
    <property type="match status" value="1"/>
</dbReference>
<dbReference type="InterPro" id="IPR013785">
    <property type="entry name" value="Aldolase_TIM"/>
</dbReference>
<dbReference type="InterPro" id="IPR000262">
    <property type="entry name" value="FMN-dep_DH"/>
</dbReference>
<dbReference type="InterPro" id="IPR011179">
    <property type="entry name" value="IPdP_isomerase"/>
</dbReference>
<dbReference type="NCBIfam" id="TIGR02151">
    <property type="entry name" value="IPP_isom_2"/>
    <property type="match status" value="1"/>
</dbReference>
<dbReference type="PANTHER" id="PTHR43665">
    <property type="entry name" value="ISOPENTENYL-DIPHOSPHATE DELTA-ISOMERASE"/>
    <property type="match status" value="1"/>
</dbReference>
<dbReference type="PANTHER" id="PTHR43665:SF1">
    <property type="entry name" value="ISOPENTENYL-DIPHOSPHATE DELTA-ISOMERASE"/>
    <property type="match status" value="1"/>
</dbReference>
<dbReference type="Pfam" id="PF01070">
    <property type="entry name" value="FMN_dh"/>
    <property type="match status" value="2"/>
</dbReference>
<dbReference type="PIRSF" id="PIRSF003314">
    <property type="entry name" value="IPP_isomerase"/>
    <property type="match status" value="1"/>
</dbReference>
<dbReference type="SMART" id="SM01240">
    <property type="entry name" value="IMPDH"/>
    <property type="match status" value="1"/>
</dbReference>
<dbReference type="SUPFAM" id="SSF51395">
    <property type="entry name" value="FMN-linked oxidoreductases"/>
    <property type="match status" value="1"/>
</dbReference>
<proteinExistence type="inferred from homology"/>
<accession>Q46CL4</accession>
<feature type="chain" id="PRO_0000229518" description="Isopentenyl-diphosphate delta-isomerase">
    <location>
        <begin position="1"/>
        <end position="365"/>
    </location>
</feature>
<feature type="binding site" evidence="1">
    <location>
        <begin position="8"/>
        <end position="9"/>
    </location>
    <ligand>
        <name>substrate</name>
    </ligand>
</feature>
<feature type="binding site" evidence="1">
    <location>
        <begin position="67"/>
        <end position="69"/>
    </location>
    <ligand>
        <name>FMN</name>
        <dbReference type="ChEBI" id="CHEBI:58210"/>
    </ligand>
</feature>
<feature type="binding site" evidence="1">
    <location>
        <begin position="97"/>
        <end position="99"/>
    </location>
    <ligand>
        <name>substrate</name>
    </ligand>
</feature>
<feature type="binding site" evidence="1">
    <location>
        <position position="97"/>
    </location>
    <ligand>
        <name>FMN</name>
        <dbReference type="ChEBI" id="CHEBI:58210"/>
    </ligand>
</feature>
<feature type="binding site" evidence="1">
    <location>
        <position position="126"/>
    </location>
    <ligand>
        <name>FMN</name>
        <dbReference type="ChEBI" id="CHEBI:58210"/>
    </ligand>
</feature>
<feature type="binding site" evidence="1">
    <location>
        <position position="160"/>
    </location>
    <ligand>
        <name>substrate</name>
    </ligand>
</feature>
<feature type="binding site" evidence="1">
    <location>
        <position position="161"/>
    </location>
    <ligand>
        <name>Mg(2+)</name>
        <dbReference type="ChEBI" id="CHEBI:18420"/>
    </ligand>
</feature>
<feature type="binding site" evidence="1">
    <location>
        <position position="192"/>
    </location>
    <ligand>
        <name>FMN</name>
        <dbReference type="ChEBI" id="CHEBI:58210"/>
    </ligand>
</feature>
<feature type="binding site" evidence="1">
    <location>
        <position position="222"/>
    </location>
    <ligand>
        <name>FMN</name>
        <dbReference type="ChEBI" id="CHEBI:58210"/>
    </ligand>
</feature>
<feature type="binding site" evidence="1">
    <location>
        <begin position="272"/>
        <end position="274"/>
    </location>
    <ligand>
        <name>FMN</name>
        <dbReference type="ChEBI" id="CHEBI:58210"/>
    </ligand>
</feature>
<feature type="binding site" evidence="1">
    <location>
        <begin position="293"/>
        <end position="294"/>
    </location>
    <ligand>
        <name>FMN</name>
        <dbReference type="ChEBI" id="CHEBI:58210"/>
    </ligand>
</feature>
<organism>
    <name type="scientific">Methanosarcina barkeri (strain Fusaro / DSM 804)</name>
    <dbReference type="NCBI Taxonomy" id="269797"/>
    <lineage>
        <taxon>Archaea</taxon>
        <taxon>Methanobacteriati</taxon>
        <taxon>Methanobacteriota</taxon>
        <taxon>Stenosarchaea group</taxon>
        <taxon>Methanomicrobia</taxon>
        <taxon>Methanosarcinales</taxon>
        <taxon>Methanosarcinaceae</taxon>
        <taxon>Methanosarcina</taxon>
    </lineage>
</organism>
<sequence length="365" mass="38772">MISTTSKRKIEHLKLCAESPVESRKVSAGFEDVTLIHRALPELDMDKLNLSIDFLGKRLQAPFLIASITGGHPDTTPVNAALAAAAEELGIGMGVGSQRAAIDDPTQEESFRVVREKAPTAFIYGNVGAAQIRQYGVDGVEKLIEMIDADALAIHLNFLQEAIQPEGDRDATGCLDMIKEICSVLGKPVIIKETGAGISREDSILLQKAGVSAIDVGGAGGTSWAGVEVYRARKSGDYASEHLGELFWDFGIPTVASIIESRVSLPIIATGGIRTGIDIAKSIALGASAASAALPFVGPALEGKESVVRVLSRMLDEFRIAMFLCGCANIQDLRNAPVVVTGWTLEYLGQRGFNVKDYAIAGDSF</sequence>
<keyword id="KW-0963">Cytoplasm</keyword>
<keyword id="KW-0285">Flavoprotein</keyword>
<keyword id="KW-0288">FMN</keyword>
<keyword id="KW-0413">Isomerase</keyword>
<keyword id="KW-0414">Isoprene biosynthesis</keyword>
<keyword id="KW-0460">Magnesium</keyword>
<keyword id="KW-0479">Metal-binding</keyword>
<keyword id="KW-0521">NADP</keyword>